<protein>
    <recommendedName>
        <fullName>Histone H3.3</fullName>
    </recommendedName>
</protein>
<proteinExistence type="inferred from homology"/>
<accession>Q6BMU4</accession>
<sequence>MARTKQTARKSTGGKAPRKQLASKAARKSAPVSGGVKKPHRYKPGTVALREIRRFQKSTELLIRKLPFQRLVREIAQDFKSDLRFQSSAIGALQEAVEAYLVSLFEDTNLCAIHAKRVTIQKKDIQLARRLRGERS</sequence>
<evidence type="ECO:0000250" key="1"/>
<evidence type="ECO:0000256" key="2">
    <source>
        <dbReference type="SAM" id="MobiDB-lite"/>
    </source>
</evidence>
<evidence type="ECO:0000305" key="3"/>
<comment type="function">
    <text>Core component of nucleosome. Nucleosomes wrap and compact DNA into chromatin, limiting DNA accessibility to the cellular machineries which require DNA as a template. Histones thereby play a central role in transcription regulation, DNA repair, DNA replication and chromosomal stability. DNA accessibility is regulated via a complex set of post-translational modifications of histones, also called histone code, and nucleosome remodeling.</text>
</comment>
<comment type="subunit">
    <text>The nucleosome is a histone octamer containing two molecules each of H2A, H2B, H3 and H4 assembled in one H3-H4 heterotetramer and two H2A-H2B heterodimers. The octamer wraps approximately 147 bp of DNA.</text>
</comment>
<comment type="subcellular location">
    <subcellularLocation>
        <location>Nucleus</location>
    </subcellularLocation>
    <subcellularLocation>
        <location>Chromosome</location>
    </subcellularLocation>
</comment>
<comment type="PTM">
    <text evidence="1">Phosphorylated by IPL1 to form H3S10ph. H3S10ph promotes subsequent H3K14ac formation by GCN5 and is required for transcriptional activation through TBP recruitment to the promoters (By similarity).</text>
</comment>
<comment type="PTM">
    <text evidence="1">Mono-, di- and trimethylated by the COMPASS complex to form H3K4me1/2/3. H3K4me activates gene expression by regulating transcription elongation and plays a role in telomere length maintenance. H3K4me enrichment correlates with transcription levels, and occurs in a 5' to 3' gradient with H3K4me3 enrichment at the 5'-end of genes, shifting to H3K4me2 and then H3K4me1. Methylated by SET2 to form H3K36me. H3K36me represses gene expression. Methylated by DOT1 to form H3K79me. H3K79me is required for association of SIR proteins with telomeric regions and for telomeric silencing. The COMPASS-mediated formation of H3K4me2/3 and the DOT1-mediated formation of H3K79me require H2BK123ub1 (By similarity).</text>
</comment>
<comment type="PTM">
    <text evidence="1">Acetylation of histone H3 leads to transcriptional activation. H3K14ac formation by GCN5 is promoted by H3S10ph. H3K14ac can also be formed by ESA1. H3K56ac formation occurs predominantly in newly synthesized H3 molecules during G1, S and G2/M of the cell cycle and may be involved in DNA repair (By similarity).</text>
</comment>
<comment type="similarity">
    <text evidence="3">Belongs to the histone H3 family.</text>
</comment>
<comment type="caution">
    <text evidence="3">To ensure consistency between histone entries, we follow the 'Brno' nomenclature for histone modifications, with positions referring to those used in the literature for the 'closest' model organism. Due to slight variations in histone sequences between organisms and to the presence of initiator methionine in UniProtKB/Swiss-Prot sequences, the actual positions of modified amino acids in the sequence generally differ. In this entry the following conventions are used: H3K4me1/2/3 = mono-, di- and trimethylated Lys-5; H3K9ac = acetylated Lys-10; H3K9me1 = monomethylated Lys-10; H3S10ph = phosphorylated Ser-11; H3K14ac = acetylated Lys-15; H3K14me2 = dimethylated Lys-15; H3K18ac = acetylated Lys-19; H3K18me1 = monomethylated Lys-19; H3K23ac = acetylated Lys-24; H3K23me1 = monomethylated Lys-24; H3K27ac = acetylated Lys-28; H3K27me1/2/3 = mono-, di- and trimethylated Lys-28; H3K36ac = acetylated Lys-37; H3K36me1/2/3 = mono-, di- and trimethylated Lys-37; H3K56ac = acetylated Lys-57; H3K64ac = acetylated Lys-65; H3K79me1/2/3 = mono-, di- and trimethylated Lys-80.</text>
</comment>
<keyword id="KW-0007">Acetylation</keyword>
<keyword id="KW-0158">Chromosome</keyword>
<keyword id="KW-0238">DNA-binding</keyword>
<keyword id="KW-0488">Methylation</keyword>
<keyword id="KW-0544">Nucleosome core</keyword>
<keyword id="KW-0539">Nucleus</keyword>
<keyword id="KW-0597">Phosphoprotein</keyword>
<keyword id="KW-1185">Reference proteome</keyword>
<gene>
    <name type="primary">HHT3</name>
    <name type="ordered locus">DEHA2F02574g</name>
</gene>
<name>H33_DEBHA</name>
<dbReference type="EMBL" id="CR382138">
    <property type="protein sequence ID" value="CAG88783.1"/>
    <property type="molecule type" value="Genomic_DNA"/>
</dbReference>
<dbReference type="RefSeq" id="XP_460476.1">
    <property type="nucleotide sequence ID" value="XM_460476.1"/>
</dbReference>
<dbReference type="SMR" id="Q6BMU4"/>
<dbReference type="STRING" id="284592.Q6BMU4"/>
<dbReference type="GeneID" id="2903054"/>
<dbReference type="KEGG" id="dha:DEHA2F02574g"/>
<dbReference type="VEuPathDB" id="FungiDB:DEHA2F02574g"/>
<dbReference type="eggNOG" id="KOG1745">
    <property type="taxonomic scope" value="Eukaryota"/>
</dbReference>
<dbReference type="HOGENOM" id="CLU_078295_4_0_1"/>
<dbReference type="InParanoid" id="Q6BMU4"/>
<dbReference type="OMA" id="THRFKPG"/>
<dbReference type="OrthoDB" id="5326060at2759"/>
<dbReference type="Proteomes" id="UP000000599">
    <property type="component" value="Chromosome F"/>
</dbReference>
<dbReference type="GO" id="GO:0000786">
    <property type="term" value="C:nucleosome"/>
    <property type="evidence" value="ECO:0007669"/>
    <property type="project" value="UniProtKB-KW"/>
</dbReference>
<dbReference type="GO" id="GO:0005634">
    <property type="term" value="C:nucleus"/>
    <property type="evidence" value="ECO:0007669"/>
    <property type="project" value="UniProtKB-SubCell"/>
</dbReference>
<dbReference type="GO" id="GO:0003677">
    <property type="term" value="F:DNA binding"/>
    <property type="evidence" value="ECO:0007669"/>
    <property type="project" value="UniProtKB-KW"/>
</dbReference>
<dbReference type="GO" id="GO:0046982">
    <property type="term" value="F:protein heterodimerization activity"/>
    <property type="evidence" value="ECO:0007669"/>
    <property type="project" value="InterPro"/>
</dbReference>
<dbReference type="GO" id="GO:0030527">
    <property type="term" value="F:structural constituent of chromatin"/>
    <property type="evidence" value="ECO:0007669"/>
    <property type="project" value="InterPro"/>
</dbReference>
<dbReference type="CDD" id="cd22911">
    <property type="entry name" value="HFD_H3"/>
    <property type="match status" value="1"/>
</dbReference>
<dbReference type="FunFam" id="1.10.20.10:FF:000010">
    <property type="entry name" value="Histone H3"/>
    <property type="match status" value="1"/>
</dbReference>
<dbReference type="Gene3D" id="1.10.20.10">
    <property type="entry name" value="Histone, subunit A"/>
    <property type="match status" value="1"/>
</dbReference>
<dbReference type="InterPro" id="IPR009072">
    <property type="entry name" value="Histone-fold"/>
</dbReference>
<dbReference type="InterPro" id="IPR007125">
    <property type="entry name" value="Histone_H2A/H2B/H3"/>
</dbReference>
<dbReference type="InterPro" id="IPR000164">
    <property type="entry name" value="Histone_H3/CENP-A"/>
</dbReference>
<dbReference type="PANTHER" id="PTHR11426">
    <property type="entry name" value="HISTONE H3"/>
    <property type="match status" value="1"/>
</dbReference>
<dbReference type="Pfam" id="PF00125">
    <property type="entry name" value="Histone"/>
    <property type="match status" value="1"/>
</dbReference>
<dbReference type="PRINTS" id="PR00622">
    <property type="entry name" value="HISTONEH3"/>
</dbReference>
<dbReference type="SMART" id="SM00428">
    <property type="entry name" value="H3"/>
    <property type="match status" value="1"/>
</dbReference>
<dbReference type="SUPFAM" id="SSF47113">
    <property type="entry name" value="Histone-fold"/>
    <property type="match status" value="1"/>
</dbReference>
<dbReference type="PROSITE" id="PS00322">
    <property type="entry name" value="HISTONE_H3_1"/>
    <property type="match status" value="1"/>
</dbReference>
<dbReference type="PROSITE" id="PS00959">
    <property type="entry name" value="HISTONE_H3_2"/>
    <property type="match status" value="1"/>
</dbReference>
<feature type="initiator methionine" description="Removed" evidence="1">
    <location>
        <position position="1"/>
    </location>
</feature>
<feature type="chain" id="PRO_0000270591" description="Histone H3.3">
    <location>
        <begin position="2"/>
        <end position="136"/>
    </location>
</feature>
<feature type="region of interest" description="Disordered" evidence="2">
    <location>
        <begin position="1"/>
        <end position="42"/>
    </location>
</feature>
<feature type="modified residue" description="N6,N6,N6-trimethyllysine; alternate" evidence="1">
    <location>
        <position position="5"/>
    </location>
</feature>
<feature type="modified residue" description="N6,N6-dimethyllysine; alternate" evidence="1">
    <location>
        <position position="5"/>
    </location>
</feature>
<feature type="modified residue" description="N6-methyllysine; alternate" evidence="1">
    <location>
        <position position="5"/>
    </location>
</feature>
<feature type="modified residue" description="N6-acetyllysine; alternate" evidence="1">
    <location>
        <position position="10"/>
    </location>
</feature>
<feature type="modified residue" description="N6-methyllysine; alternate" evidence="1">
    <location>
        <position position="10"/>
    </location>
</feature>
<feature type="modified residue" description="Phosphoserine" evidence="1">
    <location>
        <position position="11"/>
    </location>
</feature>
<feature type="modified residue" description="N6,N6-dimethyllysine; alternate" evidence="1">
    <location>
        <position position="15"/>
    </location>
</feature>
<feature type="modified residue" description="N6-acetyllysine; alternate" evidence="1">
    <location>
        <position position="15"/>
    </location>
</feature>
<feature type="modified residue" description="N6-acetyllysine; alternate" evidence="1">
    <location>
        <position position="19"/>
    </location>
</feature>
<feature type="modified residue" description="N6-methyllysine; alternate" evidence="1">
    <location>
        <position position="19"/>
    </location>
</feature>
<feature type="modified residue" description="N6-acetyllysine; alternate" evidence="1">
    <location>
        <position position="24"/>
    </location>
</feature>
<feature type="modified residue" description="N6-methyllysine; alternate" evidence="1">
    <location>
        <position position="24"/>
    </location>
</feature>
<feature type="modified residue" description="N6,N6,N6-trimethyllysine; alternate" evidence="1">
    <location>
        <position position="28"/>
    </location>
</feature>
<feature type="modified residue" description="N6,N6-dimethyllysine; alternate" evidence="1">
    <location>
        <position position="28"/>
    </location>
</feature>
<feature type="modified residue" description="N6-acetyllysine; alternate" evidence="1">
    <location>
        <position position="28"/>
    </location>
</feature>
<feature type="modified residue" description="N6-methyllysine; alternate" evidence="1">
    <location>
        <position position="28"/>
    </location>
</feature>
<feature type="modified residue" description="N6,N6,N6-trimethyllysine; alternate" evidence="1">
    <location>
        <position position="37"/>
    </location>
</feature>
<feature type="modified residue" description="N6,N6-dimethyllysine; alternate" evidence="1">
    <location>
        <position position="37"/>
    </location>
</feature>
<feature type="modified residue" description="N6-acetyllysine; alternate" evidence="1">
    <location>
        <position position="37"/>
    </location>
</feature>
<feature type="modified residue" description="N6-methyllysine; alternate" evidence="1">
    <location>
        <position position="37"/>
    </location>
</feature>
<feature type="modified residue" description="N6-acetyllysine" evidence="1">
    <location>
        <position position="57"/>
    </location>
</feature>
<feature type="modified residue" description="N6-acetyllysine" evidence="1">
    <location>
        <position position="65"/>
    </location>
</feature>
<feature type="modified residue" description="N6,N6,N6-trimethyllysine; alternate" evidence="1">
    <location>
        <position position="80"/>
    </location>
</feature>
<feature type="modified residue" description="N6,N6-dimethyllysine; alternate" evidence="1">
    <location>
        <position position="80"/>
    </location>
</feature>
<feature type="modified residue" description="N6-methyllysine; alternate" evidence="1">
    <location>
        <position position="80"/>
    </location>
</feature>
<reference key="1">
    <citation type="journal article" date="2004" name="Nature">
        <title>Genome evolution in yeasts.</title>
        <authorList>
            <person name="Dujon B."/>
            <person name="Sherman D."/>
            <person name="Fischer G."/>
            <person name="Durrens P."/>
            <person name="Casaregola S."/>
            <person name="Lafontaine I."/>
            <person name="de Montigny J."/>
            <person name="Marck C."/>
            <person name="Neuveglise C."/>
            <person name="Talla E."/>
            <person name="Goffard N."/>
            <person name="Frangeul L."/>
            <person name="Aigle M."/>
            <person name="Anthouard V."/>
            <person name="Babour A."/>
            <person name="Barbe V."/>
            <person name="Barnay S."/>
            <person name="Blanchin S."/>
            <person name="Beckerich J.-M."/>
            <person name="Beyne E."/>
            <person name="Bleykasten C."/>
            <person name="Boisrame A."/>
            <person name="Boyer J."/>
            <person name="Cattolico L."/>
            <person name="Confanioleri F."/>
            <person name="de Daruvar A."/>
            <person name="Despons L."/>
            <person name="Fabre E."/>
            <person name="Fairhead C."/>
            <person name="Ferry-Dumazet H."/>
            <person name="Groppi A."/>
            <person name="Hantraye F."/>
            <person name="Hennequin C."/>
            <person name="Jauniaux N."/>
            <person name="Joyet P."/>
            <person name="Kachouri R."/>
            <person name="Kerrest A."/>
            <person name="Koszul R."/>
            <person name="Lemaire M."/>
            <person name="Lesur I."/>
            <person name="Ma L."/>
            <person name="Muller H."/>
            <person name="Nicaud J.-M."/>
            <person name="Nikolski M."/>
            <person name="Oztas S."/>
            <person name="Ozier-Kalogeropoulos O."/>
            <person name="Pellenz S."/>
            <person name="Potier S."/>
            <person name="Richard G.-F."/>
            <person name="Straub M.-L."/>
            <person name="Suleau A."/>
            <person name="Swennen D."/>
            <person name="Tekaia F."/>
            <person name="Wesolowski-Louvel M."/>
            <person name="Westhof E."/>
            <person name="Wirth B."/>
            <person name="Zeniou-Meyer M."/>
            <person name="Zivanovic Y."/>
            <person name="Bolotin-Fukuhara M."/>
            <person name="Thierry A."/>
            <person name="Bouchier C."/>
            <person name="Caudron B."/>
            <person name="Scarpelli C."/>
            <person name="Gaillardin C."/>
            <person name="Weissenbach J."/>
            <person name="Wincker P."/>
            <person name="Souciet J.-L."/>
        </authorList>
    </citation>
    <scope>NUCLEOTIDE SEQUENCE [LARGE SCALE GENOMIC DNA]</scope>
    <source>
        <strain>ATCC 36239 / CBS 767 / BCRC 21394 / JCM 1990 / NBRC 0083 / IGC 2968</strain>
    </source>
</reference>
<organism>
    <name type="scientific">Debaryomyces hansenii (strain ATCC 36239 / CBS 767 / BCRC 21394 / JCM 1990 / NBRC 0083 / IGC 2968)</name>
    <name type="common">Yeast</name>
    <name type="synonym">Torulaspora hansenii</name>
    <dbReference type="NCBI Taxonomy" id="284592"/>
    <lineage>
        <taxon>Eukaryota</taxon>
        <taxon>Fungi</taxon>
        <taxon>Dikarya</taxon>
        <taxon>Ascomycota</taxon>
        <taxon>Saccharomycotina</taxon>
        <taxon>Pichiomycetes</taxon>
        <taxon>Debaryomycetaceae</taxon>
        <taxon>Debaryomyces</taxon>
    </lineage>
</organism>